<protein>
    <recommendedName>
        <fullName evidence="8">Transcription termination factor MTERF2, chloroplastic</fullName>
    </recommendedName>
    <alternativeName>
        <fullName evidence="7">Mitochondrial transcription termination factor 2</fullName>
    </alternativeName>
    <alternativeName>
        <fullName evidence="6">Protein EMBRYO DEFECTIVE 2219</fullName>
    </alternativeName>
</protein>
<sequence>MLLHCNVSYYTSTFSFISSSLRRQDNADDSQDTVIRRRHNARSISLYIRHNRDLKLNKNPNESQETFVPPPPPPRRDLDGENRSKLLELSLVTRRTPQFPGSIYAQSASDADIASSLPSLRNFLGSDGDDDGESEREMIVKALEIRRKVTKEIIKESLVRKGRFGITYATNVTDRLGDFVDHVMIQAAALKRLPEFSESRFNLRARTVIEDSNFVPLVRWLKHHELSYNRIAKIICMSKGNLDSIRIMIEWLKSIHVKGEFIAVAFLRSGDNILQRNREELNEIVEYLESNGVRRDWMGYVVGRCPELLSFSMEEVKSRVDFFLKMGMNQNDFGTMVYDYPKIIGFFSFQVMEKKINYLKEFGLSTEEVGRLLAYKPHLMGCSIEERWKPLVKYFYYLGIPKEGMKRILVVKPILYCIDLEKTIAPKVRFLQEMGIPNEAIGNMLVKFPSLLTNSLYKKIRPVVIFLLTRAGVTQKDIGKVIAMDPALLGCSIGTKLEPNMRYYISLGIRFYQLGEMIADFPMLLRYNVDNLRPKYRYLRRTMIRPLQDLIEFPRFFSYSLERRIIPRHTIMVENRVNFKLRYMLACTDEEFERRVRDKVERRERFEAGLDSEDSQPSDENISDQEIAFSDEAEEEEDLTE</sequence>
<gene>
    <name evidence="7" type="primary">MTERF2</name>
    <name evidence="6" type="synonym">EMB2219</name>
    <name evidence="9" type="ordered locus">At2g21710</name>
</gene>
<reference key="1">
    <citation type="journal article" date="1999" name="Nature">
        <title>Sequence and analysis of chromosome 2 of the plant Arabidopsis thaliana.</title>
        <authorList>
            <person name="Lin X."/>
            <person name="Kaul S."/>
            <person name="Rounsley S.D."/>
            <person name="Shea T.P."/>
            <person name="Benito M.-I."/>
            <person name="Town C.D."/>
            <person name="Fujii C.Y."/>
            <person name="Mason T.M."/>
            <person name="Bowman C.L."/>
            <person name="Barnstead M.E."/>
            <person name="Feldblyum T.V."/>
            <person name="Buell C.R."/>
            <person name="Ketchum K.A."/>
            <person name="Lee J.J."/>
            <person name="Ronning C.M."/>
            <person name="Koo H.L."/>
            <person name="Moffat K.S."/>
            <person name="Cronin L.A."/>
            <person name="Shen M."/>
            <person name="Pai G."/>
            <person name="Van Aken S."/>
            <person name="Umayam L."/>
            <person name="Tallon L.J."/>
            <person name="Gill J.E."/>
            <person name="Adams M.D."/>
            <person name="Carrera A.J."/>
            <person name="Creasy T.H."/>
            <person name="Goodman H.M."/>
            <person name="Somerville C.R."/>
            <person name="Copenhaver G.P."/>
            <person name="Preuss D."/>
            <person name="Nierman W.C."/>
            <person name="White O."/>
            <person name="Eisen J.A."/>
            <person name="Salzberg S.L."/>
            <person name="Fraser C.M."/>
            <person name="Venter J.C."/>
        </authorList>
    </citation>
    <scope>NUCLEOTIDE SEQUENCE [LARGE SCALE GENOMIC DNA]</scope>
    <source>
        <strain>cv. Columbia</strain>
    </source>
</reference>
<reference key="2">
    <citation type="journal article" date="2017" name="Plant J.">
        <title>Araport11: a complete reannotation of the Arabidopsis thaliana reference genome.</title>
        <authorList>
            <person name="Cheng C.Y."/>
            <person name="Krishnakumar V."/>
            <person name="Chan A.P."/>
            <person name="Thibaud-Nissen F."/>
            <person name="Schobel S."/>
            <person name="Town C.D."/>
        </authorList>
    </citation>
    <scope>GENOME REANNOTATION</scope>
    <source>
        <strain>cv. Columbia</strain>
    </source>
</reference>
<reference key="3">
    <citation type="journal article" date="2004" name="Plant Physiol.">
        <title>Identification of genes required for embryo development in Arabidopsis.</title>
        <authorList>
            <person name="Tzafrir I."/>
            <person name="Pena-Muralla R."/>
            <person name="Dickerman A."/>
            <person name="Berg M."/>
            <person name="Rogers R."/>
            <person name="Hutchens S."/>
            <person name="Sweeney T.C."/>
            <person name="McElver J."/>
            <person name="Aux G."/>
            <person name="Patton D."/>
            <person name="Meinke D."/>
        </authorList>
    </citation>
    <scope>FUNCTION</scope>
    <scope>DISRUPTION PHENOTYPE</scope>
</reference>
<reference key="4">
    <citation type="journal article" date="2011" name="Proc. Natl. Acad. Sci. U.S.A.">
        <title>Plastid gene expression and plant development require a plastidic protein of the mitochondrial transcription termination factor family.</title>
        <authorList>
            <person name="Babiychuk E."/>
            <person name="Vandepoele K."/>
            <person name="Wissing J."/>
            <person name="Garcia-Diaz M."/>
            <person name="De Rycke R."/>
            <person name="Akbari H."/>
            <person name="Joubes J."/>
            <person name="Beeckman T."/>
            <person name="Jaensch L."/>
            <person name="Frentzen M."/>
            <person name="Van Montagu M.C."/>
            <person name="Kushnir S."/>
        </authorList>
    </citation>
    <scope>SUBCELLULAR LOCATION</scope>
</reference>
<reference key="5">
    <citation type="journal article" date="2012" name="Front. Plant Sci.">
        <title>Arabidopsis thaliana mTERF proteins: evolution and functional classification.</title>
        <authorList>
            <person name="Kleine T."/>
        </authorList>
    </citation>
    <scope>GENE FAMILY</scope>
</reference>
<keyword id="KW-0150">Chloroplast</keyword>
<keyword id="KW-0934">Plastid</keyword>
<keyword id="KW-1185">Reference proteome</keyword>
<keyword id="KW-0804">Transcription</keyword>
<keyword id="KW-0805">Transcription regulation</keyword>
<keyword id="KW-0806">Transcription termination</keyword>
<keyword id="KW-0809">Transit peptide</keyword>
<dbReference type="EMBL" id="AC007019">
    <property type="protein sequence ID" value="AAD20391.1"/>
    <property type="status" value="ALT_SEQ"/>
    <property type="molecule type" value="Genomic_DNA"/>
</dbReference>
<dbReference type="EMBL" id="AC007119">
    <property type="protein sequence ID" value="AAM15397.1"/>
    <property type="status" value="ALT_SEQ"/>
    <property type="molecule type" value="Genomic_DNA"/>
</dbReference>
<dbReference type="EMBL" id="CP002685">
    <property type="protein sequence ID" value="AEC07213.1"/>
    <property type="molecule type" value="Genomic_DNA"/>
</dbReference>
<dbReference type="PIR" id="C84604">
    <property type="entry name" value="C84604"/>
</dbReference>
<dbReference type="RefSeq" id="NP_179763.3">
    <property type="nucleotide sequence ID" value="NM_127741.4"/>
</dbReference>
<dbReference type="SMR" id="F4IHL3"/>
<dbReference type="FunCoup" id="F4IHL3">
    <property type="interactions" value="902"/>
</dbReference>
<dbReference type="IntAct" id="F4IHL3">
    <property type="interactions" value="3"/>
</dbReference>
<dbReference type="STRING" id="3702.F4IHL3"/>
<dbReference type="iPTMnet" id="F4IHL3"/>
<dbReference type="PaxDb" id="3702-AT2G21710.1"/>
<dbReference type="ProteomicsDB" id="250808"/>
<dbReference type="EnsemblPlants" id="AT2G21710.1">
    <property type="protein sequence ID" value="AT2G21710.1"/>
    <property type="gene ID" value="AT2G21710"/>
</dbReference>
<dbReference type="GeneID" id="816708"/>
<dbReference type="Gramene" id="AT2G21710.1">
    <property type="protein sequence ID" value="AT2G21710.1"/>
    <property type="gene ID" value="AT2G21710"/>
</dbReference>
<dbReference type="KEGG" id="ath:AT2G21710"/>
<dbReference type="Araport" id="AT2G21710"/>
<dbReference type="TAIR" id="AT2G21710">
    <property type="gene designation" value="EMB2219"/>
</dbReference>
<dbReference type="eggNOG" id="KOG1267">
    <property type="taxonomic scope" value="Eukaryota"/>
</dbReference>
<dbReference type="HOGENOM" id="CLU_030919_0_0_1"/>
<dbReference type="InParanoid" id="F4IHL3"/>
<dbReference type="OMA" id="MLLRYNI"/>
<dbReference type="PRO" id="PR:F4IHL3"/>
<dbReference type="Proteomes" id="UP000006548">
    <property type="component" value="Chromosome 2"/>
</dbReference>
<dbReference type="ExpressionAtlas" id="F4IHL3">
    <property type="expression patterns" value="baseline and differential"/>
</dbReference>
<dbReference type="GO" id="GO:0009507">
    <property type="term" value="C:chloroplast"/>
    <property type="evidence" value="ECO:0000314"/>
    <property type="project" value="TAIR"/>
</dbReference>
<dbReference type="GO" id="GO:0009506">
    <property type="term" value="C:plasmodesma"/>
    <property type="evidence" value="ECO:0007005"/>
    <property type="project" value="TAIR"/>
</dbReference>
<dbReference type="GO" id="GO:0003690">
    <property type="term" value="F:double-stranded DNA binding"/>
    <property type="evidence" value="ECO:0007669"/>
    <property type="project" value="InterPro"/>
</dbReference>
<dbReference type="GO" id="GO:0006353">
    <property type="term" value="P:DNA-templated transcription termination"/>
    <property type="evidence" value="ECO:0007669"/>
    <property type="project" value="UniProtKB-KW"/>
</dbReference>
<dbReference type="GO" id="GO:0006355">
    <property type="term" value="P:regulation of DNA-templated transcription"/>
    <property type="evidence" value="ECO:0007669"/>
    <property type="project" value="InterPro"/>
</dbReference>
<dbReference type="FunFam" id="1.25.70.10:FF:000009">
    <property type="entry name" value="BnaA09g42960D protein"/>
    <property type="match status" value="1"/>
</dbReference>
<dbReference type="Gene3D" id="1.25.70.10">
    <property type="entry name" value="Transcription termination factor 3, mitochondrial"/>
    <property type="match status" value="1"/>
</dbReference>
<dbReference type="InterPro" id="IPR003690">
    <property type="entry name" value="MTERF"/>
</dbReference>
<dbReference type="InterPro" id="IPR038538">
    <property type="entry name" value="MTERF_sf"/>
</dbReference>
<dbReference type="PANTHER" id="PTHR13068">
    <property type="entry name" value="CGI-12 PROTEIN-RELATED"/>
    <property type="match status" value="1"/>
</dbReference>
<dbReference type="PANTHER" id="PTHR13068:SF98">
    <property type="entry name" value="TRANSCRIPTION TERMINATION FACTOR MTERF2, CHLOROPLASTIC"/>
    <property type="match status" value="1"/>
</dbReference>
<dbReference type="Pfam" id="PF02536">
    <property type="entry name" value="mTERF"/>
    <property type="match status" value="2"/>
</dbReference>
<dbReference type="SMART" id="SM00733">
    <property type="entry name" value="Mterf"/>
    <property type="match status" value="8"/>
</dbReference>
<feature type="transit peptide" description="Chloroplast" evidence="2">
    <location>
        <begin position="1"/>
        <end status="unknown"/>
    </location>
</feature>
<feature type="chain" id="PRO_0000436196" description="Transcription termination factor MTERF2, chloroplastic">
    <location>
        <begin status="unknown"/>
        <end position="641"/>
    </location>
</feature>
<feature type="region of interest" description="Disordered" evidence="3">
    <location>
        <begin position="54"/>
        <end position="80"/>
    </location>
</feature>
<feature type="region of interest" description="Disordered" evidence="3">
    <location>
        <begin position="606"/>
        <end position="641"/>
    </location>
</feature>
<feature type="compositionally biased region" description="Acidic residues" evidence="3">
    <location>
        <begin position="610"/>
        <end position="641"/>
    </location>
</feature>
<organism>
    <name type="scientific">Arabidopsis thaliana</name>
    <name type="common">Mouse-ear cress</name>
    <dbReference type="NCBI Taxonomy" id="3702"/>
    <lineage>
        <taxon>Eukaryota</taxon>
        <taxon>Viridiplantae</taxon>
        <taxon>Streptophyta</taxon>
        <taxon>Embryophyta</taxon>
        <taxon>Tracheophyta</taxon>
        <taxon>Spermatophyta</taxon>
        <taxon>Magnoliopsida</taxon>
        <taxon>eudicotyledons</taxon>
        <taxon>Gunneridae</taxon>
        <taxon>Pentapetalae</taxon>
        <taxon>rosids</taxon>
        <taxon>malvids</taxon>
        <taxon>Brassicales</taxon>
        <taxon>Brassicaceae</taxon>
        <taxon>Camelineae</taxon>
        <taxon>Arabidopsis</taxon>
    </lineage>
</organism>
<evidence type="ECO:0000250" key="1">
    <source>
        <dbReference type="UniProtKB" id="Q9ZT96"/>
    </source>
</evidence>
<evidence type="ECO:0000255" key="2"/>
<evidence type="ECO:0000256" key="3">
    <source>
        <dbReference type="SAM" id="MobiDB-lite"/>
    </source>
</evidence>
<evidence type="ECO:0000269" key="4">
    <source>
    </source>
</evidence>
<evidence type="ECO:0000269" key="5">
    <source>
    </source>
</evidence>
<evidence type="ECO:0000303" key="6">
    <source>
    </source>
</evidence>
<evidence type="ECO:0000303" key="7">
    <source>
    </source>
</evidence>
<evidence type="ECO:0000305" key="8"/>
<evidence type="ECO:0000312" key="9">
    <source>
        <dbReference type="Araport" id="AT2G21710"/>
    </source>
</evidence>
<comment type="function">
    <text evidence="1 4">Transcription termination factor involved in processing of plastid transcripts (By similarity). Essential for embryogenesis (PubMed:15266054).</text>
</comment>
<comment type="subcellular location">
    <subcellularLocation>
        <location evidence="5">Plastid</location>
        <location evidence="5">Chloroplast</location>
    </subcellularLocation>
</comment>
<comment type="disruption phenotype">
    <text evidence="4">Embryo defective. Developmental arrest of the embryo at transition from the globular to heart stage.</text>
</comment>
<comment type="similarity">
    <text evidence="8">Belongs to the mTERF family.</text>
</comment>
<comment type="sequence caution" evidence="8">
    <conflict type="erroneous gene model prediction">
        <sequence resource="EMBL-CDS" id="AAD20391"/>
    </conflict>
</comment>
<comment type="sequence caution" evidence="8">
    <conflict type="erroneous gene model prediction">
        <sequence resource="EMBL-CDS" id="AAM15397"/>
    </conflict>
</comment>
<accession>F4IHL3</accession>
<accession>Q9SJ27</accession>
<proteinExistence type="inferred from homology"/>
<name>MTEF2_ARATH</name>